<reference key="1">
    <citation type="journal article" date="2010" name="Am. J. Physiol.">
        <title>Subtype identification and functional characterization of ryanodine receptors in rat cerebral artery myocytes.</title>
        <authorList>
            <person name="Vaithianathan T."/>
            <person name="Narayanan D."/>
            <person name="Asuncion-Chin M.T."/>
            <person name="Jeyakumar L.H."/>
            <person name="Liu J."/>
            <person name="Fleischer S."/>
            <person name="Jaggar J.H."/>
            <person name="Dopico A.M."/>
        </authorList>
    </citation>
    <scope>NUCLEOTIDE SEQUENCE [MRNA] (ISOFORM 1)</scope>
    <scope>TISSUE SPECIFICITY</scope>
    <source>
        <strain>Sprague-Dawley</strain>
        <tissue>Cerebral artery</tissue>
    </source>
</reference>
<reference key="2">
    <citation type="journal article" date="2010" name="Biochem. Biophys. Res. Commun.">
        <title>A novel ryanodine receptor expressed in pancreatic islets by alternative splicing from type 2 ryanodine receptor gene.</title>
        <authorList>
            <person name="Takasawa S."/>
            <person name="Kuroki M."/>
            <person name="Nata K."/>
            <person name="Noguchi N."/>
            <person name="Ikeda T."/>
            <person name="Yamauchi A."/>
            <person name="Ota H."/>
            <person name="Itaya-Hironaka A."/>
            <person name="Sakuramoto-Tsuchida S."/>
            <person name="Takahashi I."/>
            <person name="Yoshikawa T."/>
            <person name="Shimosegawa T."/>
            <person name="Okamoto H."/>
        </authorList>
    </citation>
    <scope>NUCLEOTIDE SEQUENCE [MRNA] (ISOFORM 2)</scope>
    <scope>FUNCTION</scope>
    <scope>TISSUE SPECIFICITY</scope>
    <source>
        <tissue>Pancreatic islet</tissue>
    </source>
</reference>
<reference key="3">
    <citation type="journal article" date="2008" name="Biochem. Biophys. Res. Commun.">
        <title>Ryanodine receptor phosphorylation at serine 2030, 2808 and 2814 in rat cardiomyocytes.</title>
        <authorList>
            <person name="Huke S."/>
            <person name="Bers D.M."/>
        </authorList>
    </citation>
    <scope>PHOSPHORYLATION AT SER-2800 AND SER-2806</scope>
    <scope>TISSUE SPECIFICITY</scope>
</reference>
<reference key="4">
    <citation type="journal article" date="2004" name="Nature">
        <title>Genome sequence of the Brown Norway rat yields insights into mammalian evolution.</title>
        <authorList>
            <person name="Gibbs R.A."/>
            <person name="Weinstock G.M."/>
            <person name="Metzker M.L."/>
            <person name="Muzny D.M."/>
            <person name="Sodergren E.J."/>
            <person name="Scherer S."/>
            <person name="Scott G."/>
            <person name="Steffen D."/>
            <person name="Worley K.C."/>
            <person name="Burch P.E."/>
            <person name="Okwuonu G."/>
            <person name="Hines S."/>
            <person name="Lewis L."/>
            <person name="Deramo C."/>
            <person name="Delgado O."/>
            <person name="Dugan-Rocha S."/>
            <person name="Miner G."/>
            <person name="Morgan M."/>
            <person name="Hawes A."/>
            <person name="Gill R."/>
            <person name="Holt R.A."/>
            <person name="Adams M.D."/>
            <person name="Amanatides P.G."/>
            <person name="Baden-Tillson H."/>
            <person name="Barnstead M."/>
            <person name="Chin S."/>
            <person name="Evans C.A."/>
            <person name="Ferriera S."/>
            <person name="Fosler C."/>
            <person name="Glodek A."/>
            <person name="Gu Z."/>
            <person name="Jennings D."/>
            <person name="Kraft C.L."/>
            <person name="Nguyen T."/>
            <person name="Pfannkoch C.M."/>
            <person name="Sitter C."/>
            <person name="Sutton G.G."/>
            <person name="Venter J.C."/>
            <person name="Woodage T."/>
            <person name="Smith D."/>
            <person name="Lee H.-M."/>
            <person name="Gustafson E."/>
            <person name="Cahill P."/>
            <person name="Kana A."/>
            <person name="Doucette-Stamm L."/>
            <person name="Weinstock K."/>
            <person name="Fechtel K."/>
            <person name="Weiss R.B."/>
            <person name="Dunn D.M."/>
            <person name="Green E.D."/>
            <person name="Blakesley R.W."/>
            <person name="Bouffard G.G."/>
            <person name="De Jong P.J."/>
            <person name="Osoegawa K."/>
            <person name="Zhu B."/>
            <person name="Marra M."/>
            <person name="Schein J."/>
            <person name="Bosdet I."/>
            <person name="Fjell C."/>
            <person name="Jones S."/>
            <person name="Krzywinski M."/>
            <person name="Mathewson C."/>
            <person name="Siddiqui A."/>
            <person name="Wye N."/>
            <person name="McPherson J."/>
            <person name="Zhao S."/>
            <person name="Fraser C.M."/>
            <person name="Shetty J."/>
            <person name="Shatsman S."/>
            <person name="Geer K."/>
            <person name="Chen Y."/>
            <person name="Abramzon S."/>
            <person name="Nierman W.C."/>
            <person name="Havlak P.H."/>
            <person name="Chen R."/>
            <person name="Durbin K.J."/>
            <person name="Egan A."/>
            <person name="Ren Y."/>
            <person name="Song X.-Z."/>
            <person name="Li B."/>
            <person name="Liu Y."/>
            <person name="Qin X."/>
            <person name="Cawley S."/>
            <person name="Cooney A.J."/>
            <person name="D'Souza L.M."/>
            <person name="Martin K."/>
            <person name="Wu J.Q."/>
            <person name="Gonzalez-Garay M.L."/>
            <person name="Jackson A.R."/>
            <person name="Kalafus K.J."/>
            <person name="McLeod M.P."/>
            <person name="Milosavljevic A."/>
            <person name="Virk D."/>
            <person name="Volkov A."/>
            <person name="Wheeler D.A."/>
            <person name="Zhang Z."/>
            <person name="Bailey J.A."/>
            <person name="Eichler E.E."/>
            <person name="Tuzun E."/>
            <person name="Birney E."/>
            <person name="Mongin E."/>
            <person name="Ureta-Vidal A."/>
            <person name="Woodwark C."/>
            <person name="Zdobnov E."/>
            <person name="Bork P."/>
            <person name="Suyama M."/>
            <person name="Torrents D."/>
            <person name="Alexandersson M."/>
            <person name="Trask B.J."/>
            <person name="Young J.M."/>
            <person name="Huang H."/>
            <person name="Wang H."/>
            <person name="Xing H."/>
            <person name="Daniels S."/>
            <person name="Gietzen D."/>
            <person name="Schmidt J."/>
            <person name="Stevens K."/>
            <person name="Vitt U."/>
            <person name="Wingrove J."/>
            <person name="Camara F."/>
            <person name="Mar Alba M."/>
            <person name="Abril J.F."/>
            <person name="Guigo R."/>
            <person name="Smit A."/>
            <person name="Dubchak I."/>
            <person name="Rubin E.M."/>
            <person name="Couronne O."/>
            <person name="Poliakov A."/>
            <person name="Huebner N."/>
            <person name="Ganten D."/>
            <person name="Goesele C."/>
            <person name="Hummel O."/>
            <person name="Kreitler T."/>
            <person name="Lee Y.-A."/>
            <person name="Monti J."/>
            <person name="Schulz H."/>
            <person name="Zimdahl H."/>
            <person name="Himmelbauer H."/>
            <person name="Lehrach H."/>
            <person name="Jacob H.J."/>
            <person name="Bromberg S."/>
            <person name="Gullings-Handley J."/>
            <person name="Jensen-Seaman M.I."/>
            <person name="Kwitek A.E."/>
            <person name="Lazar J."/>
            <person name="Pasko D."/>
            <person name="Tonellato P.J."/>
            <person name="Twigger S."/>
            <person name="Ponting C.P."/>
            <person name="Duarte J.M."/>
            <person name="Rice S."/>
            <person name="Goodstadt L."/>
            <person name="Beatson S.A."/>
            <person name="Emes R.D."/>
            <person name="Winter E.E."/>
            <person name="Webber C."/>
            <person name="Brandt P."/>
            <person name="Nyakatura G."/>
            <person name="Adetobi M."/>
            <person name="Chiaromonte F."/>
            <person name="Elnitski L."/>
            <person name="Eswara P."/>
            <person name="Hardison R.C."/>
            <person name="Hou M."/>
            <person name="Kolbe D."/>
            <person name="Makova K."/>
            <person name="Miller W."/>
            <person name="Nekrutenko A."/>
            <person name="Riemer C."/>
            <person name="Schwartz S."/>
            <person name="Taylor J."/>
            <person name="Yang S."/>
            <person name="Zhang Y."/>
            <person name="Lindpaintner K."/>
            <person name="Andrews T.D."/>
            <person name="Caccamo M."/>
            <person name="Clamp M."/>
            <person name="Clarke L."/>
            <person name="Curwen V."/>
            <person name="Durbin R.M."/>
            <person name="Eyras E."/>
            <person name="Searle S.M."/>
            <person name="Cooper G.M."/>
            <person name="Batzoglou S."/>
            <person name="Brudno M."/>
            <person name="Sidow A."/>
            <person name="Stone E.A."/>
            <person name="Payseur B.A."/>
            <person name="Bourque G."/>
            <person name="Lopez-Otin C."/>
            <person name="Puente X.S."/>
            <person name="Chakrabarti K."/>
            <person name="Chatterji S."/>
            <person name="Dewey C."/>
            <person name="Pachter L."/>
            <person name="Bray N."/>
            <person name="Yap V.B."/>
            <person name="Caspi A."/>
            <person name="Tesler G."/>
            <person name="Pevzner P.A."/>
            <person name="Haussler D."/>
            <person name="Roskin K.M."/>
            <person name="Baertsch R."/>
            <person name="Clawson H."/>
            <person name="Furey T.S."/>
            <person name="Hinrichs A.S."/>
            <person name="Karolchik D."/>
            <person name="Kent W.J."/>
            <person name="Rosenbloom K.R."/>
            <person name="Trumbower H."/>
            <person name="Weirauch M."/>
            <person name="Cooper D.N."/>
            <person name="Stenson P.D."/>
            <person name="Ma B."/>
            <person name="Brent M."/>
            <person name="Arumugam M."/>
            <person name="Shteynberg D."/>
            <person name="Copley R.R."/>
            <person name="Taylor M.S."/>
            <person name="Riethman H."/>
            <person name="Mudunuri U."/>
            <person name="Peterson J."/>
            <person name="Guyer M."/>
            <person name="Felsenfeld A."/>
            <person name="Old S."/>
            <person name="Mockrin S."/>
            <person name="Collins F.S."/>
        </authorList>
    </citation>
    <scope>NUCLEOTIDE SEQUENCE [LARGE SCALE GENOMIC DNA]</scope>
    <source>
        <strain>Brown Norway</strain>
    </source>
</reference>
<reference key="5">
    <citation type="journal article" date="2010" name="Circ. Res.">
        <title>Kinetics of FKBP12.6 binding to ryanodine receptors in permeabilized cardiac myocytes and effects on Ca sparks.</title>
        <authorList>
            <person name="Guo T."/>
            <person name="Cornea R.L."/>
            <person name="Huke S."/>
            <person name="Camors E."/>
            <person name="Yang Y."/>
            <person name="Picht E."/>
            <person name="Fruen B.R."/>
            <person name="Bers D.M."/>
        </authorList>
    </citation>
    <scope>FUNCTION</scope>
    <scope>INTERACTION WITH FKBP1A AND FKBP1B</scope>
    <scope>TISSUE SPECIFICITY</scope>
</reference>
<reference key="6">
    <citation type="journal article" date="2012" name="Nat. Commun.">
        <title>Quantitative maps of protein phosphorylation sites across 14 different rat organs and tissues.</title>
        <authorList>
            <person name="Lundby A."/>
            <person name="Secher A."/>
            <person name="Lage K."/>
            <person name="Nordsborg N.B."/>
            <person name="Dmytriyev A."/>
            <person name="Lundby C."/>
            <person name="Olsen J.V."/>
        </authorList>
    </citation>
    <scope>PHOSPHORYLATION [LARGE SCALE ANALYSIS] AT SER-1334; SER-1863; SER-2023; SER-2689; SER-2800; SER-2803 AND SER-2806</scope>
    <scope>IDENTIFICATION BY MASS SPECTROMETRY [LARGE SCALE ANALYSIS]</scope>
</reference>
<reference key="7">
    <citation type="journal article" date="2008" name="J. Biol. Chem.">
        <title>S100A1 and calmodulin compete for the same binding site on ryanodine receptor.</title>
        <authorList>
            <person name="Wright N.T."/>
            <person name="Prosser B.L."/>
            <person name="Varney K.M."/>
            <person name="Zimmer D.B."/>
            <person name="Schneider M.F."/>
            <person name="Weber D.J."/>
        </authorList>
    </citation>
    <scope>STRUCTURE BY NMR OF 3563-3574 IN COMPLEX WITH S100A1</scope>
    <scope>INTERACTION WITH CALM AND S100A1</scope>
</reference>
<keyword id="KW-0002">3D-structure</keyword>
<keyword id="KW-0025">Alternative splicing</keyword>
<keyword id="KW-0106">Calcium</keyword>
<keyword id="KW-0107">Calcium channel</keyword>
<keyword id="KW-0109">Calcium transport</keyword>
<keyword id="KW-0112">Calmodulin-binding</keyword>
<keyword id="KW-0217">Developmental protein</keyword>
<keyword id="KW-0407">Ion channel</keyword>
<keyword id="KW-0406">Ion transport</keyword>
<keyword id="KW-1071">Ligand-gated ion channel</keyword>
<keyword id="KW-0472">Membrane</keyword>
<keyword id="KW-0597">Phosphoprotein</keyword>
<keyword id="KW-0675">Receptor</keyword>
<keyword id="KW-1185">Reference proteome</keyword>
<keyword id="KW-0677">Repeat</keyword>
<keyword id="KW-0703">Sarcoplasmic reticulum</keyword>
<keyword id="KW-0812">Transmembrane</keyword>
<keyword id="KW-1133">Transmembrane helix</keyword>
<keyword id="KW-0813">Transport</keyword>
<comment type="function">
    <text evidence="5 12 14">Cytosolic calcium-activated calcium channel that mediates the release of Ca(2+) from the sarcoplasmic reticulum into the cytosol and thereby plays a key role in triggering cardiac muscle contraction. Aberrant channel activation can lead to cardiac arrhythmia. In cardiac myocytes, calcium release is triggered by increased Ca(2+) cytosolic levels due to activation of the L-type calcium channel CACNA1C. The calcium channel activity is modulated by formation of heterotetramers with RYR3. Required for cellular calcium ion homeostasis. Required for embryonic heart development.</text>
</comment>
<comment type="catalytic activity">
    <reaction evidence="5">
        <text>Ca(2+)(in) = Ca(2+)(out)</text>
        <dbReference type="Rhea" id="RHEA:29671"/>
        <dbReference type="ChEBI" id="CHEBI:29108"/>
    </reaction>
</comment>
<comment type="activity regulation">
    <text evidence="3">The calcium release is activated by increased cytosolic calcium levels, by nitric oxyde (NO), caffeine and ATP. Channel activity is modulated by the alkaloid ryanodine that binds to the open Ca-release channel with high affinity. At low concentrations, ryanodine maintains the channel in an open conformation. High ryanodine concentrations inhibit channel activity. Channel activity is regulated by calmodulin (CALM). Channel activity is inhibited by magnesium ions, possibly by competition for calcium binding sites.</text>
</comment>
<comment type="subunit">
    <text evidence="2 4 5 10 12">Homotetramer. Can also form heterotetramers with RYR3. Identified in a complex composed of RYR2, FKBP1B, PKA catalytic subunit, PRKAR2A, AKAP6, and the protein phosphatases PP2A and PP1. Interacts directly with FKBP1B, PKA, PP1 and PP2A (By similarity). Interacts with FKBP1A and FKBP1B; these interactions may stabilize the channel in its closed state and prevent Ca(2+) leaks. Interacts with CALM and S100A1; these interactions regulate channel activity. Interacts with SELENON (By similarity). In cardiac muscles, identified in a complex composed of FSD2, CMYA5 and RYR2 (By similarity). Interacts with PKD2 (via N-terminus); regulates RYR2 channel activity (By similarity).</text>
</comment>
<comment type="subcellular location">
    <subcellularLocation>
        <location evidence="5">Sarcoplasmic reticulum membrane</location>
        <topology evidence="6">Multi-pass membrane protein</topology>
    </subcellularLocation>
</comment>
<comment type="alternative products">
    <event type="alternative splicing"/>
    <isoform>
        <id>B0LPN4-1</id>
        <name>1</name>
        <sequence type="displayed"/>
    </isoform>
    <isoform>
        <id>B0LPN4-2</id>
        <name>2</name>
        <sequence type="described" ref="VSP_042300"/>
    </isoform>
    <isoform>
        <id>B0LPN4-3</id>
        <name>3</name>
        <sequence type="described" ref="VSP_062480"/>
    </isoform>
</comment>
<comment type="tissue specificity">
    <text evidence="11 12 13 14">Detected in heart muscle myocytes (at protein level). Widely expressed. Detected in heart muscle and cerebral artery smooth muscle. Detected in pancreatic islet cells.</text>
</comment>
<comment type="domain">
    <text evidence="3">The calcium release channel activity resides in the C-terminal region while the remaining part of the protein resides in the cytoplasm.</text>
</comment>
<comment type="PTM">
    <text evidence="1">Channel activity is modulated by phosphorylation. Phosphorylation at Ser-2800 and Ser-2806 increases the open probability of the calcium channel. Phosphorylation is increased in failing heart, leading to calcium leaks and increased cytoplasmic Ca(2+) levels (By similarity).</text>
</comment>
<comment type="PTM">
    <text evidence="1">Phosphorylation at Ser-2023 by PKA enhances the response to lumenal calcium.</text>
</comment>
<comment type="similarity">
    <text evidence="16">Belongs to the ryanodine receptor (TC 1.A.3.1) family. RYR2 subfamily.</text>
</comment>
<gene>
    <name evidence="18" type="primary">Ryr2</name>
</gene>
<feature type="chain" id="PRO_0000415583" description="Ryanodine receptor 2">
    <location>
        <begin position="1"/>
        <end position="4955"/>
    </location>
</feature>
<feature type="topological domain" description="Cytoplasmic" evidence="6">
    <location>
        <begin position="1"/>
        <end position="4220"/>
    </location>
</feature>
<feature type="transmembrane region" description="Helical" evidence="6">
    <location>
        <begin position="4221"/>
        <end position="4241"/>
    </location>
</feature>
<feature type="transmembrane region" description="Helical" evidence="6">
    <location>
        <begin position="4267"/>
        <end position="4287"/>
    </location>
</feature>
<feature type="transmembrane region" description="Helical" evidence="6">
    <location>
        <begin position="4491"/>
        <end position="4511"/>
    </location>
</feature>
<feature type="transmembrane region" description="Helical" evidence="6">
    <location>
        <begin position="4568"/>
        <end position="4588"/>
    </location>
</feature>
<feature type="transmembrane region" description="Helical" evidence="6">
    <location>
        <begin position="4718"/>
        <end position="4738"/>
    </location>
</feature>
<feature type="transmembrane region" description="Helical" evidence="6">
    <location>
        <begin position="4757"/>
        <end position="4777"/>
    </location>
</feature>
<feature type="intramembrane region" description="Pore-forming" evidence="1">
    <location>
        <begin position="4808"/>
        <end position="4817"/>
    </location>
</feature>
<feature type="transmembrane region" description="Helical" evidence="6">
    <location>
        <begin position="4838"/>
        <end position="4858"/>
    </location>
</feature>
<feature type="topological domain" description="Cytoplasmic" evidence="6">
    <location>
        <begin position="4859"/>
        <end position="4955"/>
    </location>
</feature>
<feature type="domain" description="MIR 1" evidence="7">
    <location>
        <begin position="103"/>
        <end position="158"/>
    </location>
</feature>
<feature type="domain" description="MIR 2" evidence="7">
    <location>
        <begin position="165"/>
        <end position="210"/>
    </location>
</feature>
<feature type="domain" description="MIR 3" evidence="7">
    <location>
        <begin position="218"/>
        <end position="273"/>
    </location>
</feature>
<feature type="domain" description="MIR 4" evidence="7">
    <location>
        <begin position="279"/>
        <end position="336"/>
    </location>
</feature>
<feature type="domain" description="MIR 5" evidence="7">
    <location>
        <begin position="344"/>
        <end position="401"/>
    </location>
</feature>
<feature type="domain" description="B30.2/SPRY 1" evidence="8">
    <location>
        <begin position="592"/>
        <end position="802"/>
    </location>
</feature>
<feature type="repeat" description="1">
    <location>
        <begin position="846"/>
        <end position="959"/>
    </location>
</feature>
<feature type="repeat" description="2">
    <location>
        <begin position="960"/>
        <end position="1073"/>
    </location>
</feature>
<feature type="domain" description="B30.2/SPRY 2" evidence="8">
    <location>
        <begin position="1018"/>
        <end position="1215"/>
    </location>
</feature>
<feature type="domain" description="B30.2/SPRY 3" evidence="8">
    <location>
        <begin position="1350"/>
        <end position="1556"/>
    </location>
</feature>
<feature type="repeat" description="3">
    <location>
        <begin position="2684"/>
        <end position="2802"/>
    </location>
</feature>
<feature type="repeat" description="4">
    <location>
        <begin position="2804"/>
        <end position="2917"/>
    </location>
</feature>
<feature type="region of interest" description="4 X approximate repeats">
    <location>
        <begin position="846"/>
        <end position="2917"/>
    </location>
</feature>
<feature type="region of interest" description="Disordered" evidence="9">
    <location>
        <begin position="1349"/>
        <end position="1370"/>
    </location>
</feature>
<feature type="region of interest" description="Disordered" evidence="9">
    <location>
        <begin position="2346"/>
        <end position="2371"/>
    </location>
</feature>
<feature type="region of interest" description="Interaction with CALM" evidence="1">
    <location>
        <begin position="3561"/>
        <end position="3590"/>
    </location>
</feature>
<feature type="region of interest" description="Disordered" evidence="9">
    <location>
        <begin position="3681"/>
        <end position="3707"/>
    </location>
</feature>
<feature type="region of interest" description="Disordered" evidence="9">
    <location>
        <begin position="4198"/>
        <end position="4217"/>
    </location>
</feature>
<feature type="region of interest" description="Disordered" evidence="9">
    <location>
        <begin position="4324"/>
        <end position="4351"/>
    </location>
</feature>
<feature type="region of interest" description="Disordered" evidence="9">
    <location>
        <begin position="4408"/>
        <end position="4452"/>
    </location>
</feature>
<feature type="compositionally biased region" description="Basic and acidic residues" evidence="9">
    <location>
        <begin position="4199"/>
        <end position="4217"/>
    </location>
</feature>
<feature type="compositionally biased region" description="Basic and acidic residues" evidence="9">
    <location>
        <begin position="4408"/>
        <end position="4446"/>
    </location>
</feature>
<feature type="modified residue" description="Phosphoserine" evidence="19">
    <location>
        <position position="1334"/>
    </location>
</feature>
<feature type="modified residue" description="Phosphoserine" evidence="19">
    <location>
        <position position="1863"/>
    </location>
</feature>
<feature type="modified residue" description="Phosphoserine" evidence="19">
    <location>
        <position position="2023"/>
    </location>
</feature>
<feature type="modified residue" description="Phosphoserine" evidence="2">
    <location>
        <position position="2361"/>
    </location>
</feature>
<feature type="modified residue" description="Phosphoserine" evidence="19">
    <location>
        <position position="2689"/>
    </location>
</feature>
<feature type="modified residue" description="Phosphoserine" evidence="2">
    <location>
        <position position="2789"/>
    </location>
</feature>
<feature type="modified residue" description="Phosphoserine; by CaMK2D and PKA" evidence="11 19">
    <location>
        <position position="2800"/>
    </location>
</feature>
<feature type="modified residue" description="Phosphoserine" evidence="19">
    <location>
        <position position="2803"/>
    </location>
</feature>
<feature type="modified residue" description="Phosphoserine; by CaMK2D" evidence="11 19">
    <location>
        <position position="2806"/>
    </location>
</feature>
<feature type="modified residue" description="Phosphoserine" evidence="2">
    <location>
        <position position="2939"/>
    </location>
</feature>
<feature type="splice variant" id="VSP_062480" description="In isoform 3.">
    <original>G</original>
    <variation>GQVDVEKW</variation>
    <location>
        <position position="91"/>
    </location>
</feature>
<feature type="splice variant" id="VSP_042300" description="In isoform 2." evidence="15">
    <location>
        <begin position="3696"/>
        <end position="3703"/>
    </location>
</feature>
<feature type="sequence conflict" description="In Ref. 1; ABY79796." evidence="16" ref="1">
    <original>E</original>
    <variation>G</variation>
    <location>
        <position position="40"/>
    </location>
</feature>
<feature type="sequence conflict" description="In Ref. 1; ABY79796." evidence="16" ref="1">
    <original>W</original>
    <variation>R</variation>
    <location>
        <position position="364"/>
    </location>
</feature>
<feature type="sequence conflict" description="In Ref. 1; ABY79796." evidence="16" ref="1">
    <original>Q</original>
    <variation>R</variation>
    <location>
        <position position="1838"/>
    </location>
</feature>
<feature type="sequence conflict" description="In Ref. 1; ABY79796." evidence="16" ref="1">
    <location>
        <begin position="1952"/>
        <end position="1954"/>
    </location>
</feature>
<feature type="sequence conflict" description="In Ref. 1; ABY79796." evidence="16" ref="1">
    <original>F</original>
    <variation>S</variation>
    <location>
        <position position="2693"/>
    </location>
</feature>
<feature type="sequence conflict" description="In Ref. 1; ABY79796." evidence="16" ref="1">
    <original>I</original>
    <variation>T</variation>
    <location>
        <position position="3218"/>
    </location>
</feature>
<feature type="sequence conflict" description="In Ref. 1; ABY79796." evidence="16" ref="1">
    <original>E</original>
    <variation>G</variation>
    <location>
        <position position="3228"/>
    </location>
</feature>
<feature type="sequence conflict" description="In Ref. 1; ABY79796." evidence="16" ref="1">
    <original>D</original>
    <variation>N</variation>
    <location>
        <position position="3357"/>
    </location>
</feature>
<feature type="sequence conflict" description="In Ref. 1; ABY79796." evidence="16" ref="1">
    <original>V</original>
    <variation>I</variation>
    <location>
        <position position="3543"/>
    </location>
</feature>
<feature type="sequence conflict" description="In Ref. 1; ABY79796." evidence="16" ref="1">
    <original>I</original>
    <variation>T</variation>
    <location>
        <position position="3753"/>
    </location>
</feature>
<feature type="sequence conflict" description="In Ref. 1; ABY79796." evidence="16" ref="1">
    <original>D</original>
    <variation>G</variation>
    <location>
        <position position="3887"/>
    </location>
</feature>
<feature type="sequence conflict" description="In Ref. 1; ABY79796." evidence="16" ref="1">
    <original>V</original>
    <variation>A</variation>
    <location>
        <position position="3992"/>
    </location>
</feature>
<feature type="sequence conflict" description="In Ref. 1; ABY79796." evidence="16" ref="1">
    <original>D</original>
    <variation>G</variation>
    <location>
        <position position="4198"/>
    </location>
</feature>
<feature type="sequence conflict" description="In Ref. 1; ABY79796." evidence="16" ref="1">
    <original>V</original>
    <variation>A</variation>
    <location>
        <position position="4264"/>
    </location>
</feature>
<feature type="sequence conflict" description="In Ref. 1; ABY79796." evidence="16" ref="1">
    <original>S</original>
    <variation>G</variation>
    <location>
        <position position="4538"/>
    </location>
</feature>
<feature type="sequence conflict" description="In Ref. 1; ABY79796." evidence="16" ref="1">
    <original>D</original>
    <variation>G</variation>
    <location>
        <position position="4669"/>
    </location>
</feature>
<feature type="sequence conflict" description="In Ref. 1; ABY79796." evidence="16" ref="1">
    <original>Y</original>
    <variation>H</variation>
    <location>
        <position position="4932"/>
    </location>
</feature>
<feature type="helix" evidence="20">
    <location>
        <begin position="3564"/>
        <end position="3573"/>
    </location>
</feature>
<sequence>MADAGEGEDEIQFLRTDDEVVLQCTATIHKEQQKLCLAAEGFGNRLCFLESTSNSKNVPPDLSICTFVLEQSLSVRALQEMLANTVEKSEGKFMMKTAQGGGHRTLLYGHAILLRHSYSGMYLCCLSTSRSSTDKLAFDVGLQEDTTGEACWWTIHPASKQRSEGEKVRVGDDLILVSVSSERYLHLSYGNSSWRVDAAFQQTLWSVAPISSGSEAAQGYLIGGDVLRLLHGHMDECLTVPSGEHGEEQRRTVHYEGGAVSVHARSLWRLETLRVAWSGSHIRWGQPFRLRHVTTGKYLSLMEDKNLLLMDKEKADVKSTAFAFRSSKEKLDAGVRKEVDGMGTSEIKYGDSICYIQHVDTGLWLTYQAVDVKSARMGSIQRKAIMHHEGHMDDGLNLSRSQHEESRTARVIRSTVFLFNRFIRGLDALSKRAKLPTVDLPIESVSLSLQDLIGYFHPPDEHLEHEDKQNRLRALKNRQNLFQEEGMINLVLECIDRLHVYSSAAHFADVAGREAGESWKSILNSLYELLAALIRGNRKNCAQFSGSLDWLISRLERLEASSGILEVLHCVLVESPEALNIIKEGHIKSIISLLDKHGRNHKVLDVLCSLCVCHGVAVRSNQHLICDNLLPGRDLLLQTRLVNHVSSMRPNIFLGVSEGSAQYKKWYYELMVDHTEPFVTAEATHLRVGWASTEGYSPYPGGGEEWGGNGVGDDLFSYGFDGLHLWSGCIARTVSSPNQHLLRTDDVISCCLDLSAPSISFRINGQPVQGMFENFNIDGLFFPVVSFSAGIKVRFLLGGRHGEFKFLPPPGYAACYEAVLPKEKLKVEHSREYKQERTYTRDLLGPTVSLTQAAFTPVPVDTSQIVLPPHLERIRERLAENIHELWVMNKIELGWQYGPVRDDNKRQHPCLVEFCKLPEQERNYNLQMSLETLKTLLALGCHVGIADEHAEEKVKKMKLPKNYQLTSGYKPAPMDLSFIKLTPSQEAMVDKLAENAHNVWARDRIRQGWTYGIQQDVKNRRNPRLVPYTLLDDRTKKSNKDSLREAVRTLLGYGYHLEAPDQDHASRAEVCSGTGERFRIFRAEKTYAVKAGRWYFEFEAVTAGDMRVGWSRPGCQPDLELGSDERAFAFDGFKAQRWHQGNEHYGRSWQAGDVVGCMVDMNEHTMMFTLNGEILLDDSGSELAFKDFDVGDGFIPVCSLGVAQVGRMNFGKDVSTLKYFTICGLQEGYEPFAVNTNRDITMWLSKRLPQFLQVPSNHEHIEVTRIDGTIDSSPCLKVTQKSFGSQNSNTDIMFYRLSMPIECAEVFSKSVAGGIPGAGFYGPKNDLEDFDVDSDFEVLMKTAHGHLVPDRMDKDKETPKPEFNNHKDYAQEKPSRLKQRFLLRRTKPDYSTSHSARLTEDVLADDRDDYEYLMQTSTYYYSVRIFPGQEPANVWVGWITSDFHQYDTGFDLDRVRTVTVTLGDEKGKVHESIKRSNCYMVCAGESMSPGQGRNNSNGLEIGCVVDAASGLLTFIANGKELSTYYQVEPSTKLFPAVFAQATSPNVFQFELGRIKNVMPLSAGLFKSEHKNPVPQCPPRLHVQFLSHVLWSRMPNQFLKVDVSRISERQGWLVQCLDPLQFMSLHIPEENRSVDILELTEQEELLQFHYHTLRLYSAVCALGNHRVAHALCSHVDEPQLLYAIENKYMPGLLRAGYYDLLIDIHLSSYATARLMMNNEFIVPMTEETKSITLFPDENKKHGLPGIGLSTSLRPRMCFSSPSFVSISNECYQYSPEFPLDILKAKTIQMLTEAVKEGSLHARDPVGGTTEFLFVPLIKLFYTLLIMGIFHNEDLKHILQLIEPSVFKEAATPEEEGGAPEKEISIDDSKLEVKEEAKAGKRPKEGLLQMKLPEPVKLQMCLLLQYLCDCQVRHRIEAIVAFSDDFVAKLQDNQRFRYNEVMQALNMSAALTARKTKEFRSPPQEQINMLLNFKDDKSECPCPEEIRDQLLDFHEDLMTHCGIELDEDGSLDGSNDLTIRGRLLSLVEKVTYLKKKQAEKPVASDSRKSSSLQQLISETMVRWAQESVIEDPELVRAMFVLLHRQYDGIGGLVRALPKTYTINGVSVEDTINLLASLGQIRSLLSVRMGKEEEKLMIRGLGDIMNNKVFYQHPNLMRALGMHETVMEVMVNVLGGGESKEITFPKMVANCCRFLCYFCRISRQNQKAMFDHLSYLLENSSVGLASPAMRGSTPLDVAAASVMDNNELALALREPDLEKVVRYLAGCGLQSCQMLVSKGYPDIGWNPVEGERYLDFLRFAVFCNGESVEENANVVVRLLIRRPECFGPALRGEGGNGLLAAMEEAIKIAEDPSRDGPSPTSGSSKTLDAEEEEDDTIHMGNAIMTFYAALIDLLGRCAPEMHLIHAGKGEAIRIRSILRSLIPLGDLVGVISIAFQMPTIAKDGKVVEPDMSAGFCPDHKAAMVLFLDRVYGIEVQDFLLHLLEVGFLPDLRAAASLDTAALSATDMALALNRYLCTAVLPLLTRCAPLFAGTEHHASLIDSLLHTVYRLSKGCSLTKAQRDSIEVCLLSICGQLRPSMMQHLLRRLVFDVPLLNEHAKMPLKLLTNHYERCWKYYCLPGGWSNFGAASEEELHLSRKLFWGIFDALSQKKYEQELFKLALPCLSAVAGALPPDYMESNYVSMMEKQSSMDSEGNFNPQPVDTSNITIPEKLEYFINKYAEHSHDKWSMDKLANGWIYGEIYSDSSKIQPLMKPYKLLSEKEKEIYRWPIKESLKTMLAWGWRIERTREGDSMALYNRTRRISQTSQVSIDAAHGYSPRAIDMSNVTLSRDLHAMAEMMAENYHNIWAKKKKMELESKGGGNHPLLVPYDTLTAKEKAKDREKAQDIFKFLQISGYAVSRGFKDLDLDTPSIEKRFAYSFLQQLIRYVDEAHQYILEFDGGSRSKGEHFPYEQEIKFFAKVVLPLIDQYFKNHRLYFLSAASRPLCTGGHASNKEKEMVTSLFCKLGVLVRHRISLFGNDATSIVNCLHILGQTLDARTVMKTGLDSVKSALRAFLDNAAEDLEKTMENLKQGQFTHTRSQPKGVTQIINYTTVALLPMLSSLFEHIGQHQFGEDLILEDVQVSCYRILTSLYALGTSKSIYVERQRSALGECLAAFAGAFPIAFLETHLDKHNVYSIYNTRSSRERAALSLPANVEDVCPNIPSLEKLMTEIIELAESGIRYTQMPHMMEVVLPMLCSYMSRWWEHGPENHPERAEMCCTALNSEHMNTLLGNILKIIYNNLGIDEGAWMKRLAVFSQPIINKVKPQLLKTHFLPLMEKLKKKAAMVVSEEDHLKAEARGDMSEAELLILDEFTTLARDLYAFYPLLIRFVDYNRAKWLKEPNPEAEELFRMVAEVFIYWSKSHNFKREEQNFVVQNEINNMSFLITDTKSKMSKAAISDQERKKMKRKGDRYSMQTSLIVAALKRLLPIGLNICAPGDQELIALAKNRFSLKDTEEEVRDVIRSNIHLQGKLEDPAIRWQMALYKDLPNRAEDTSDPERTVERVLDIANVLFHLEQVEHPQRSKKAVWHKLLSKQRKRAVVACFRMAPLYNLPRHRAVNLFLQGYEKSWIETEEHYFEDKLIEDLAKPGSELPEEDEAMKRVDPLHQLILLFSRTALTEKCKLEEDFLYMAYADIMAKSCHDEEDDDGEEEVKSFEVTGSQRSKEKEMEKQKLLYQQARLHDRGAAEMVLQTFSASKGETGPMVAATLKLGIAILNGGNSTVQQKMLDYLKEKKDVGFFQSLAGLMQSCSVLDLNAFERQNKAEGLGMVTEEGSGEKVLQDDEFTCDLFRFLQLLCEGHNSDFQNYLRTQTGNNTTVNIIISTVDYLLRVQESISDFYWYYSGKDIIDEQGQRNFSKAIQVAKQVFNTLTEYIQGPCTGNQQSLAHSRLWDAVVGFLHVFAHMQMKLSQDSSQIELLKELMDLQKDMVVMLLSMLEGNVVNGTIGKQMVDMLVESSNNVEMILKFFDMFLKLKDLTSSDTFKEYDPDGKGVISKRDFHKAMESHKHYTQSETEFLLSCAETDENETLDYEEFVKRFHEPAKDIGFNVAVLLTNLSEHMPNDTRLQTFLELAESVLNYFQPFLGRIEIMGSAKRIERVYFEISESSRTQWEKPQVKESKRQFIFDVVNEGGEKEKMELFVNFCEDTIFEMQLAAQISESDLNERSANKEESEKERPEEQAPRMGFFSLLTVQSALFALRYNVLTLVRMLSLKSLKKQMKRMKKMTVKDMVSAFFSSYWSVFVTLLHFVASVCRGFFRIVSSLLLGGSLVEGAKKIKVAELLANMPDPTQDEVRGDEEEGERKPLESALPSEDLTDLKELTEESDLLSDIFGLDLKREGGQYKLIPHNPNAGLSDLMTNPIPVPEVQEKFQEQKVKEEKEGKEETKSEPEKAEGEDGEKEEKAKDDKGKQKLRQLHTHRYGEPEVPESAFWKKIIAYQQKLLNYFARNFYNMRMLALFVAFAINFILLFYKVSTSSVVEGKELPTRTSSDAAKVTTSLDSSPHRIIAVHYVLEESSGYMEPTLRILAILHTIISFFCIIGYYCLKVPLVIFKREKEVARKLEFDGLYITEQPSEDDIKGQWDRLVINTQSFPNNYWDKFVKRKVMDKYGEFYGRDRISELLGMDKAALDFSDAREKKKPKKDSSLSAVLNSIDVKYQMWKLGVVFTDNSFLYLAWYMTMSVLGHYNNFFFAAHLLDIAMGFKTLRTILSSVTHNGKQLVLTVGLLAVVVYLYTVVAFNFFRKFYNKSEDGDTPDMKCDDMLTCYMFHMYVGVRAGGGIGDEIEDPAGDEYEIYRIIFDITFFFFVIVILLAIIQGLIIDAFGELRDQQEQVKEDMETKCFICGIGNDYFDTVPHGFETHTLQEHNLANYLFFLMYLINKDETEHTGQESYVWKMYQERCWEFFPAGDCFRKQYEDQLN</sequence>
<accession>B0LPN4</accession>
<accession>D7UNT3</accession>
<accession>F1LRZ1</accession>
<accession>F1LS89</accession>
<protein>
    <recommendedName>
        <fullName evidence="17">Ryanodine receptor 2</fullName>
        <shortName>RYR-2</shortName>
        <shortName>RyR2</shortName>
    </recommendedName>
    <alternativeName>
        <fullName>Cardiac muscle ryanodine receptor</fullName>
    </alternativeName>
    <alternativeName>
        <fullName>Cardiac muscle ryanodine receptor-calcium release channel</fullName>
    </alternativeName>
    <alternativeName>
        <fullName>Type 2 ryanodine receptor</fullName>
    </alternativeName>
</protein>
<name>RYR2_RAT</name>
<evidence type="ECO:0000250" key="1"/>
<evidence type="ECO:0000250" key="2">
    <source>
        <dbReference type="UniProtKB" id="E9Q401"/>
    </source>
</evidence>
<evidence type="ECO:0000250" key="3">
    <source>
        <dbReference type="UniProtKB" id="P11716"/>
    </source>
</evidence>
<evidence type="ECO:0000250" key="4">
    <source>
        <dbReference type="UniProtKB" id="P30957"/>
    </source>
</evidence>
<evidence type="ECO:0000250" key="5">
    <source>
        <dbReference type="UniProtKB" id="Q92736"/>
    </source>
</evidence>
<evidence type="ECO:0000255" key="6"/>
<evidence type="ECO:0000255" key="7">
    <source>
        <dbReference type="PROSITE-ProRule" id="PRU00131"/>
    </source>
</evidence>
<evidence type="ECO:0000255" key="8">
    <source>
        <dbReference type="PROSITE-ProRule" id="PRU00548"/>
    </source>
</evidence>
<evidence type="ECO:0000256" key="9">
    <source>
        <dbReference type="SAM" id="MobiDB-lite"/>
    </source>
</evidence>
<evidence type="ECO:0000269" key="10">
    <source>
    </source>
</evidence>
<evidence type="ECO:0000269" key="11">
    <source>
    </source>
</evidence>
<evidence type="ECO:0000269" key="12">
    <source>
    </source>
</evidence>
<evidence type="ECO:0000269" key="13">
    <source>
    </source>
</evidence>
<evidence type="ECO:0000269" key="14">
    <source>
    </source>
</evidence>
<evidence type="ECO:0000303" key="15">
    <source>
    </source>
</evidence>
<evidence type="ECO:0000305" key="16"/>
<evidence type="ECO:0000305" key="17">
    <source>
    </source>
</evidence>
<evidence type="ECO:0000312" key="18">
    <source>
        <dbReference type="RGD" id="620314"/>
    </source>
</evidence>
<evidence type="ECO:0007744" key="19">
    <source>
    </source>
</evidence>
<evidence type="ECO:0007829" key="20">
    <source>
        <dbReference type="PDB" id="2K2F"/>
    </source>
</evidence>
<organism>
    <name type="scientific">Rattus norvegicus</name>
    <name type="common">Rat</name>
    <dbReference type="NCBI Taxonomy" id="10116"/>
    <lineage>
        <taxon>Eukaryota</taxon>
        <taxon>Metazoa</taxon>
        <taxon>Chordata</taxon>
        <taxon>Craniata</taxon>
        <taxon>Vertebrata</taxon>
        <taxon>Euteleostomi</taxon>
        <taxon>Mammalia</taxon>
        <taxon>Eutheria</taxon>
        <taxon>Euarchontoglires</taxon>
        <taxon>Glires</taxon>
        <taxon>Rodentia</taxon>
        <taxon>Myomorpha</taxon>
        <taxon>Muroidea</taxon>
        <taxon>Muridae</taxon>
        <taxon>Murinae</taxon>
        <taxon>Rattus</taxon>
    </lineage>
</organism>
<proteinExistence type="evidence at protein level"/>
<dbReference type="EMBL" id="EU346200">
    <property type="protein sequence ID" value="ABY79796.1"/>
    <property type="molecule type" value="mRNA"/>
</dbReference>
<dbReference type="EMBL" id="AB204523">
    <property type="protein sequence ID" value="BAJ10276.1"/>
    <property type="molecule type" value="mRNA"/>
</dbReference>
<dbReference type="RefSeq" id="NP_001177972.2">
    <molecule id="B0LPN4-2"/>
    <property type="nucleotide sequence ID" value="NM_001191043.3"/>
</dbReference>
<dbReference type="RefSeq" id="NP_114467.2">
    <molecule id="B0LPN4-1"/>
    <property type="nucleotide sequence ID" value="NM_032078.3"/>
</dbReference>
<dbReference type="RefSeq" id="XP_063132829.1">
    <molecule id="B0LPN4-3"/>
    <property type="nucleotide sequence ID" value="XM_063276759.1"/>
</dbReference>
<dbReference type="PDB" id="2K2F">
    <property type="method" value="NMR"/>
    <property type="chains" value="C/D=3563-3574"/>
</dbReference>
<dbReference type="PDBsum" id="2K2F"/>
<dbReference type="BioGRID" id="604379">
    <property type="interactions" value="4"/>
</dbReference>
<dbReference type="CORUM" id="B0LPN4"/>
<dbReference type="FunCoup" id="B0LPN4">
    <property type="interactions" value="1619"/>
</dbReference>
<dbReference type="IntAct" id="B0LPN4">
    <property type="interactions" value="1"/>
</dbReference>
<dbReference type="STRING" id="10116.ENSRNOP00000059019"/>
<dbReference type="BindingDB" id="B0LPN4"/>
<dbReference type="ChEMBL" id="CHEMBL3388"/>
<dbReference type="DrugCentral" id="B0LPN4"/>
<dbReference type="CarbonylDB" id="B0LPN4"/>
<dbReference type="GlyGen" id="B0LPN4">
    <property type="glycosylation" value="3 sites, 1 O-linked glycan (1 site)"/>
</dbReference>
<dbReference type="iPTMnet" id="B0LPN4"/>
<dbReference type="PhosphoSitePlus" id="B0LPN4"/>
<dbReference type="SwissPalm" id="B0LPN4"/>
<dbReference type="PaxDb" id="10116-ENSRNOP00000059019"/>
<dbReference type="PeptideAtlas" id="B0LPN4"/>
<dbReference type="ABCD" id="B0LPN4">
    <property type="antibodies" value="1 sequenced antibody"/>
</dbReference>
<dbReference type="Ensembl" id="ENSRNOT00000023601.8">
    <molecule id="B0LPN4-3"/>
    <property type="protein sequence ID" value="ENSRNOP00000023601.7"/>
    <property type="gene ID" value="ENSRNOG00000017060.9"/>
</dbReference>
<dbReference type="Ensembl" id="ENSRNOT00000067949.4">
    <molecule id="B0LPN4-1"/>
    <property type="protein sequence ID" value="ENSRNOP00000059019.4"/>
    <property type="gene ID" value="ENSRNOG00000017060.9"/>
</dbReference>
<dbReference type="Ensembl" id="ENSRNOT00060028627">
    <molecule id="B0LPN4-3"/>
    <property type="protein sequence ID" value="ENSRNOP00060023022"/>
    <property type="gene ID" value="ENSRNOG00060015609"/>
</dbReference>
<dbReference type="Ensembl" id="ENSRNOT00060028685">
    <molecule id="B0LPN4-1"/>
    <property type="protein sequence ID" value="ENSRNOP00060023073"/>
    <property type="gene ID" value="ENSRNOG00060015609"/>
</dbReference>
<dbReference type="Ensembl" id="ENSRNOT00065034837">
    <molecule id="B0LPN4-3"/>
    <property type="protein sequence ID" value="ENSRNOP00065027978"/>
    <property type="gene ID" value="ENSRNOG00065020109"/>
</dbReference>
<dbReference type="Ensembl" id="ENSRNOT00065034855">
    <molecule id="B0LPN4-1"/>
    <property type="protein sequence ID" value="ENSRNOP00065027995"/>
    <property type="gene ID" value="ENSRNOG00065020109"/>
</dbReference>
<dbReference type="GeneID" id="689560"/>
<dbReference type="KEGG" id="rno:689560"/>
<dbReference type="AGR" id="RGD:620314"/>
<dbReference type="CTD" id="6262"/>
<dbReference type="RGD" id="620314">
    <property type="gene designation" value="Ryr2"/>
</dbReference>
<dbReference type="VEuPathDB" id="HostDB:ENSRNOG00000017060"/>
<dbReference type="eggNOG" id="KOG2243">
    <property type="taxonomic scope" value="Eukaryota"/>
</dbReference>
<dbReference type="GeneTree" id="ENSGT00940000154906"/>
<dbReference type="HOGENOM" id="CLU_000040_2_0_1"/>
<dbReference type="InParanoid" id="B0LPN4"/>
<dbReference type="OMA" id="HYEDTSD"/>
<dbReference type="OrthoDB" id="258495at2759"/>
<dbReference type="TreeFam" id="TF315244"/>
<dbReference type="Reactome" id="R-RNO-2672351">
    <property type="pathway name" value="Stimuli-sensing channels"/>
</dbReference>
<dbReference type="Reactome" id="R-RNO-5578775">
    <property type="pathway name" value="Ion homeostasis"/>
</dbReference>
<dbReference type="EvolutionaryTrace" id="B0LPN4"/>
<dbReference type="PRO" id="PR:B0LPN4"/>
<dbReference type="Proteomes" id="UP000002494">
    <property type="component" value="Chromosome 17"/>
</dbReference>
<dbReference type="Bgee" id="ENSRNOG00000017060">
    <property type="expression patterns" value="Expressed in heart and 9 other cell types or tissues"/>
</dbReference>
<dbReference type="GO" id="GO:0031672">
    <property type="term" value="C:A band"/>
    <property type="evidence" value="ECO:0000314"/>
    <property type="project" value="RGD"/>
</dbReference>
<dbReference type="GO" id="GO:0034704">
    <property type="term" value="C:calcium channel complex"/>
    <property type="evidence" value="ECO:0000266"/>
    <property type="project" value="RGD"/>
</dbReference>
<dbReference type="GO" id="GO:0031234">
    <property type="term" value="C:extrinsic component of cytoplasmic side of plasma membrane"/>
    <property type="evidence" value="ECO:0000314"/>
    <property type="project" value="RGD"/>
</dbReference>
<dbReference type="GO" id="GO:0016020">
    <property type="term" value="C:membrane"/>
    <property type="evidence" value="ECO:0000266"/>
    <property type="project" value="RGD"/>
</dbReference>
<dbReference type="GO" id="GO:0005635">
    <property type="term" value="C:nuclear envelope"/>
    <property type="evidence" value="ECO:0000314"/>
    <property type="project" value="BHF-UCL"/>
</dbReference>
<dbReference type="GO" id="GO:0032991">
    <property type="term" value="C:protein-containing complex"/>
    <property type="evidence" value="ECO:0000314"/>
    <property type="project" value="RGD"/>
</dbReference>
<dbReference type="GO" id="GO:0042383">
    <property type="term" value="C:sarcolemma"/>
    <property type="evidence" value="ECO:0000314"/>
    <property type="project" value="RGD"/>
</dbReference>
<dbReference type="GO" id="GO:0030017">
    <property type="term" value="C:sarcomere"/>
    <property type="evidence" value="ECO:0000266"/>
    <property type="project" value="RGD"/>
</dbReference>
<dbReference type="GO" id="GO:0016529">
    <property type="term" value="C:sarcoplasmic reticulum"/>
    <property type="evidence" value="ECO:0000314"/>
    <property type="project" value="BHF-UCL"/>
</dbReference>
<dbReference type="GO" id="GO:0033017">
    <property type="term" value="C:sarcoplasmic reticulum membrane"/>
    <property type="evidence" value="ECO:0000314"/>
    <property type="project" value="BHF-UCL"/>
</dbReference>
<dbReference type="GO" id="GO:0005790">
    <property type="term" value="C:smooth endoplasmic reticulum"/>
    <property type="evidence" value="ECO:0000266"/>
    <property type="project" value="RGD"/>
</dbReference>
<dbReference type="GO" id="GO:0030018">
    <property type="term" value="C:Z disc"/>
    <property type="evidence" value="ECO:0000314"/>
    <property type="project" value="BHF-UCL"/>
</dbReference>
<dbReference type="GO" id="GO:0005262">
    <property type="term" value="F:calcium channel activity"/>
    <property type="evidence" value="ECO:0000250"/>
    <property type="project" value="UniProtKB"/>
</dbReference>
<dbReference type="GO" id="GO:0005509">
    <property type="term" value="F:calcium ion binding"/>
    <property type="evidence" value="ECO:0007669"/>
    <property type="project" value="InterPro"/>
</dbReference>
<dbReference type="GO" id="GO:0048763">
    <property type="term" value="F:calcium-induced calcium release activity"/>
    <property type="evidence" value="ECO:0000314"/>
    <property type="project" value="RGD"/>
</dbReference>
<dbReference type="GO" id="GO:0005516">
    <property type="term" value="F:calmodulin binding"/>
    <property type="evidence" value="ECO:0000250"/>
    <property type="project" value="UniProtKB"/>
</dbReference>
<dbReference type="GO" id="GO:0019899">
    <property type="term" value="F:enzyme binding"/>
    <property type="evidence" value="ECO:0000266"/>
    <property type="project" value="RGD"/>
</dbReference>
<dbReference type="GO" id="GO:0042802">
    <property type="term" value="F:identical protein binding"/>
    <property type="evidence" value="ECO:0000266"/>
    <property type="project" value="RGD"/>
</dbReference>
<dbReference type="GO" id="GO:0015278">
    <property type="term" value="F:intracellularly gated calcium channel activity"/>
    <property type="evidence" value="ECO:0000250"/>
    <property type="project" value="UniProtKB"/>
</dbReference>
<dbReference type="GO" id="GO:0034236">
    <property type="term" value="F:protein kinase A catalytic subunit binding"/>
    <property type="evidence" value="ECO:0000266"/>
    <property type="project" value="RGD"/>
</dbReference>
<dbReference type="GO" id="GO:0034237">
    <property type="term" value="F:protein kinase A regulatory subunit binding"/>
    <property type="evidence" value="ECO:0000266"/>
    <property type="project" value="RGD"/>
</dbReference>
<dbReference type="GO" id="GO:0019901">
    <property type="term" value="F:protein kinase binding"/>
    <property type="evidence" value="ECO:0000266"/>
    <property type="project" value="RGD"/>
</dbReference>
<dbReference type="GO" id="GO:0005219">
    <property type="term" value="F:ryanodine-sensitive calcium-release channel activity"/>
    <property type="evidence" value="ECO:0000314"/>
    <property type="project" value="RGD"/>
</dbReference>
<dbReference type="GO" id="GO:0097110">
    <property type="term" value="F:scaffold protein binding"/>
    <property type="evidence" value="ECO:0000353"/>
    <property type="project" value="BHF-UCL"/>
</dbReference>
<dbReference type="GO" id="GO:0043924">
    <property type="term" value="F:suramin binding"/>
    <property type="evidence" value="ECO:0000266"/>
    <property type="project" value="RGD"/>
</dbReference>
<dbReference type="GO" id="GO:0097553">
    <property type="term" value="P:calcium ion transmembrane import into cytosol"/>
    <property type="evidence" value="ECO:0000266"/>
    <property type="project" value="RGD"/>
</dbReference>
<dbReference type="GO" id="GO:0070588">
    <property type="term" value="P:calcium ion transmembrane transport"/>
    <property type="evidence" value="ECO:0000315"/>
    <property type="project" value="RGD"/>
</dbReference>
<dbReference type="GO" id="GO:0006816">
    <property type="term" value="P:calcium ion transport"/>
    <property type="evidence" value="ECO:0000250"/>
    <property type="project" value="UniProtKB"/>
</dbReference>
<dbReference type="GO" id="GO:0060402">
    <property type="term" value="P:calcium ion transport into cytosol"/>
    <property type="evidence" value="ECO:0000266"/>
    <property type="project" value="RGD"/>
</dbReference>
<dbReference type="GO" id="GO:0019722">
    <property type="term" value="P:calcium-mediated signaling"/>
    <property type="evidence" value="ECO:0000250"/>
    <property type="project" value="UniProtKB"/>
</dbReference>
<dbReference type="GO" id="GO:0060048">
    <property type="term" value="P:cardiac muscle contraction"/>
    <property type="evidence" value="ECO:0000266"/>
    <property type="project" value="RGD"/>
</dbReference>
<dbReference type="GO" id="GO:0003300">
    <property type="term" value="P:cardiac muscle hypertrophy"/>
    <property type="evidence" value="ECO:0000266"/>
    <property type="project" value="RGD"/>
</dbReference>
<dbReference type="GO" id="GO:0071313">
    <property type="term" value="P:cellular response to caffeine"/>
    <property type="evidence" value="ECO:0000250"/>
    <property type="project" value="UniProtKB"/>
</dbReference>
<dbReference type="GO" id="GO:0071872">
    <property type="term" value="P:cellular response to epinephrine stimulus"/>
    <property type="evidence" value="ECO:0000266"/>
    <property type="project" value="RGD"/>
</dbReference>
<dbReference type="GO" id="GO:0005513">
    <property type="term" value="P:detection of calcium ion"/>
    <property type="evidence" value="ECO:0000266"/>
    <property type="project" value="RGD"/>
</dbReference>
<dbReference type="GO" id="GO:0003143">
    <property type="term" value="P:embryonic heart tube morphogenesis"/>
    <property type="evidence" value="ECO:0000250"/>
    <property type="project" value="UniProtKB"/>
</dbReference>
<dbReference type="GO" id="GO:0051649">
    <property type="term" value="P:establishment of localization in cell"/>
    <property type="evidence" value="ECO:0000266"/>
    <property type="project" value="RGD"/>
</dbReference>
<dbReference type="GO" id="GO:0072599">
    <property type="term" value="P:establishment of protein localization to endoplasmic reticulum"/>
    <property type="evidence" value="ECO:0000266"/>
    <property type="project" value="RGD"/>
</dbReference>
<dbReference type="GO" id="GO:0006874">
    <property type="term" value="P:intracellular calcium ion homeostasis"/>
    <property type="evidence" value="ECO:0000250"/>
    <property type="project" value="UniProtKB"/>
</dbReference>
<dbReference type="GO" id="GO:0003220">
    <property type="term" value="P:left ventricular cardiac muscle tissue morphogenesis"/>
    <property type="evidence" value="ECO:0000266"/>
    <property type="project" value="RGD"/>
</dbReference>
<dbReference type="GO" id="GO:0071421">
    <property type="term" value="P:manganese ion transmembrane transport"/>
    <property type="evidence" value="ECO:0000315"/>
    <property type="project" value="RGD"/>
</dbReference>
<dbReference type="GO" id="GO:0034220">
    <property type="term" value="P:monoatomic ion transmembrane transport"/>
    <property type="evidence" value="ECO:0000315"/>
    <property type="project" value="RGD"/>
</dbReference>
<dbReference type="GO" id="GO:0051481">
    <property type="term" value="P:negative regulation of cytosolic calcium ion concentration"/>
    <property type="evidence" value="ECO:0000314"/>
    <property type="project" value="RGD"/>
</dbReference>
<dbReference type="GO" id="GO:0010460">
    <property type="term" value="P:positive regulation of heart rate"/>
    <property type="evidence" value="ECO:0000266"/>
    <property type="project" value="RGD"/>
</dbReference>
<dbReference type="GO" id="GO:0051284">
    <property type="term" value="P:positive regulation of sequestering of calcium ion"/>
    <property type="evidence" value="ECO:0000266"/>
    <property type="project" value="RGD"/>
</dbReference>
<dbReference type="GO" id="GO:0098735">
    <property type="term" value="P:positive regulation of the force of heart contraction"/>
    <property type="evidence" value="ECO:0000266"/>
    <property type="project" value="RGD"/>
</dbReference>
<dbReference type="GO" id="GO:0086029">
    <property type="term" value="P:Purkinje myocyte to ventricular cardiac muscle cell signaling"/>
    <property type="evidence" value="ECO:0000266"/>
    <property type="project" value="RGD"/>
</dbReference>
<dbReference type="GO" id="GO:0098910">
    <property type="term" value="P:regulation of atrial cardiac muscle cell action potential"/>
    <property type="evidence" value="ECO:0000266"/>
    <property type="project" value="RGD"/>
</dbReference>
<dbReference type="GO" id="GO:0098904">
    <property type="term" value="P:regulation of AV node cell action potential"/>
    <property type="evidence" value="ECO:0000266"/>
    <property type="project" value="RGD"/>
</dbReference>
<dbReference type="GO" id="GO:0055117">
    <property type="term" value="P:regulation of cardiac muscle contraction"/>
    <property type="evidence" value="ECO:0000266"/>
    <property type="project" value="RGD"/>
</dbReference>
<dbReference type="GO" id="GO:0010882">
    <property type="term" value="P:regulation of cardiac muscle contraction by calcium ion signaling"/>
    <property type="evidence" value="ECO:0000266"/>
    <property type="project" value="RGD"/>
</dbReference>
<dbReference type="GO" id="GO:0010881">
    <property type="term" value="P:regulation of cardiac muscle contraction by regulation of the release of sequestered calcium ion"/>
    <property type="evidence" value="ECO:0000266"/>
    <property type="project" value="RGD"/>
</dbReference>
<dbReference type="GO" id="GO:0051480">
    <property type="term" value="P:regulation of cytosolic calcium ion concentration"/>
    <property type="evidence" value="ECO:0000315"/>
    <property type="project" value="RGD"/>
</dbReference>
<dbReference type="GO" id="GO:0002027">
    <property type="term" value="P:regulation of heart rate"/>
    <property type="evidence" value="ECO:0000266"/>
    <property type="project" value="RGD"/>
</dbReference>
<dbReference type="GO" id="GO:0098907">
    <property type="term" value="P:regulation of SA node cell action potential"/>
    <property type="evidence" value="ECO:0000266"/>
    <property type="project" value="RGD"/>
</dbReference>
<dbReference type="GO" id="GO:0098911">
    <property type="term" value="P:regulation of ventricular cardiac muscle cell action potential"/>
    <property type="evidence" value="ECO:0000266"/>
    <property type="project" value="RGD"/>
</dbReference>
<dbReference type="GO" id="GO:0051209">
    <property type="term" value="P:release of sequestered calcium ion into cytosol"/>
    <property type="evidence" value="ECO:0000266"/>
    <property type="project" value="RGD"/>
</dbReference>
<dbReference type="GO" id="GO:0014808">
    <property type="term" value="P:release of sequestered calcium ion into cytosol by sarcoplasmic reticulum"/>
    <property type="evidence" value="ECO:0000250"/>
    <property type="project" value="UniProtKB"/>
</dbReference>
<dbReference type="GO" id="GO:0031000">
    <property type="term" value="P:response to caffeine"/>
    <property type="evidence" value="ECO:0000266"/>
    <property type="project" value="RGD"/>
</dbReference>
<dbReference type="GO" id="GO:0051592">
    <property type="term" value="P:response to calcium ion"/>
    <property type="evidence" value="ECO:0000314"/>
    <property type="project" value="RGD"/>
</dbReference>
<dbReference type="GO" id="GO:0001666">
    <property type="term" value="P:response to hypoxia"/>
    <property type="evidence" value="ECO:0000270"/>
    <property type="project" value="RGD"/>
</dbReference>
<dbReference type="GO" id="GO:0032026">
    <property type="term" value="P:response to magnesium ion"/>
    <property type="evidence" value="ECO:0000314"/>
    <property type="project" value="RGD"/>
</dbReference>
<dbReference type="GO" id="GO:0014850">
    <property type="term" value="P:response to muscle activity"/>
    <property type="evidence" value="ECO:0000266"/>
    <property type="project" value="RGD"/>
</dbReference>
<dbReference type="GO" id="GO:0035994">
    <property type="term" value="P:response to muscle stretch"/>
    <property type="evidence" value="ECO:0000266"/>
    <property type="project" value="RGD"/>
</dbReference>
<dbReference type="GO" id="GO:0007584">
    <property type="term" value="P:response to nutrient"/>
    <property type="evidence" value="ECO:0000270"/>
    <property type="project" value="RGD"/>
</dbReference>
<dbReference type="GO" id="GO:0051775">
    <property type="term" value="P:response to redox state"/>
    <property type="evidence" value="ECO:0000266"/>
    <property type="project" value="RGD"/>
</dbReference>
<dbReference type="GO" id="GO:0009410">
    <property type="term" value="P:response to xenobiotic stimulus"/>
    <property type="evidence" value="ECO:0000270"/>
    <property type="project" value="RGD"/>
</dbReference>
<dbReference type="GO" id="GO:0070296">
    <property type="term" value="P:sarcoplasmic reticulum calcium ion transport"/>
    <property type="evidence" value="ECO:0000315"/>
    <property type="project" value="RGD"/>
</dbReference>
<dbReference type="GO" id="GO:0097050">
    <property type="term" value="P:type B pancreatic cell apoptotic process"/>
    <property type="evidence" value="ECO:0000266"/>
    <property type="project" value="RGD"/>
</dbReference>
<dbReference type="GO" id="GO:0086005">
    <property type="term" value="P:ventricular cardiac muscle cell action potential"/>
    <property type="evidence" value="ECO:0000266"/>
    <property type="project" value="RGD"/>
</dbReference>
<dbReference type="CDD" id="cd23291">
    <property type="entry name" value="beta-trefoil_MIR_RyR2"/>
    <property type="match status" value="1"/>
</dbReference>
<dbReference type="CDD" id="cd12877">
    <property type="entry name" value="SPRY1_RyR"/>
    <property type="match status" value="1"/>
</dbReference>
<dbReference type="CDD" id="cd12878">
    <property type="entry name" value="SPRY2_RyR"/>
    <property type="match status" value="1"/>
</dbReference>
<dbReference type="CDD" id="cd12879">
    <property type="entry name" value="SPRY3_RyR"/>
    <property type="match status" value="1"/>
</dbReference>
<dbReference type="FunFam" id="1.10.238.10:FF:000040">
    <property type="entry name" value="Ryanodine receptor 2"/>
    <property type="match status" value="1"/>
</dbReference>
<dbReference type="FunFam" id="1.10.490.160:FF:000005">
    <property type="entry name" value="Ryanodine receptor 2"/>
    <property type="match status" value="1"/>
</dbReference>
<dbReference type="FunFam" id="1.10.490.160:FF:000001">
    <property type="entry name" value="Ryanodine receptor 2 (Cardiac)"/>
    <property type="match status" value="1"/>
</dbReference>
<dbReference type="FunFam" id="2.60.120.920:FF:000012">
    <property type="entry name" value="Ryanodine receptor 2 (Cardiac)"/>
    <property type="match status" value="1"/>
</dbReference>
<dbReference type="FunFam" id="2.80.10.50:FF:000006">
    <property type="entry name" value="Ryanodine receptor 2 (Cardiac)"/>
    <property type="match status" value="1"/>
</dbReference>
<dbReference type="FunFam" id="2.80.10.50:FF:000016">
    <property type="entry name" value="Ryanodine receptor 2 (Cardiac)"/>
    <property type="match status" value="1"/>
</dbReference>
<dbReference type="FunFam" id="1.10.287.70:FF:000017">
    <property type="entry name" value="ryanodine receptor isoform X2"/>
    <property type="match status" value="1"/>
</dbReference>
<dbReference type="FunFam" id="1.25.10.30:FF:000002">
    <property type="entry name" value="ryanodine receptor isoform X2"/>
    <property type="match status" value="1"/>
</dbReference>
<dbReference type="FunFam" id="2.60.120.920:FF:000002">
    <property type="entry name" value="ryanodine receptor isoform X2"/>
    <property type="match status" value="1"/>
</dbReference>
<dbReference type="FunFam" id="2.60.120.920:FF:000003">
    <property type="entry name" value="ryanodine receptor isoform X2"/>
    <property type="match status" value="1"/>
</dbReference>
<dbReference type="Gene3D" id="1.10.287.70">
    <property type="match status" value="1"/>
</dbReference>
<dbReference type="Gene3D" id="1.10.490.160">
    <property type="match status" value="3"/>
</dbReference>
<dbReference type="Gene3D" id="2.60.120.920">
    <property type="match status" value="3"/>
</dbReference>
<dbReference type="Gene3D" id="2.80.10.50">
    <property type="match status" value="2"/>
</dbReference>
<dbReference type="Gene3D" id="1.10.238.10">
    <property type="entry name" value="EF-hand"/>
    <property type="match status" value="1"/>
</dbReference>
<dbReference type="Gene3D" id="1.25.10.30">
    <property type="entry name" value="IP3 receptor type 1 binding core, RIH domain"/>
    <property type="match status" value="1"/>
</dbReference>
<dbReference type="InterPro" id="IPR001870">
    <property type="entry name" value="B30.2/SPRY"/>
</dbReference>
<dbReference type="InterPro" id="IPR043136">
    <property type="entry name" value="B30.2/SPRY_sf"/>
</dbReference>
<dbReference type="InterPro" id="IPR013320">
    <property type="entry name" value="ConA-like_dom_sf"/>
</dbReference>
<dbReference type="InterPro" id="IPR011992">
    <property type="entry name" value="EF-hand-dom_pair"/>
</dbReference>
<dbReference type="InterPro" id="IPR002048">
    <property type="entry name" value="EF_hand_dom"/>
</dbReference>
<dbReference type="InterPro" id="IPR014821">
    <property type="entry name" value="Ins145_P3_rcpt"/>
</dbReference>
<dbReference type="InterPro" id="IPR005821">
    <property type="entry name" value="Ion_trans_dom"/>
</dbReference>
<dbReference type="InterPro" id="IPR036300">
    <property type="entry name" value="MIR_dom_sf"/>
</dbReference>
<dbReference type="InterPro" id="IPR016093">
    <property type="entry name" value="MIR_motif"/>
</dbReference>
<dbReference type="InterPro" id="IPR013662">
    <property type="entry name" value="RIH_assoc-dom"/>
</dbReference>
<dbReference type="InterPro" id="IPR000699">
    <property type="entry name" value="RIH_dom"/>
</dbReference>
<dbReference type="InterPro" id="IPR013333">
    <property type="entry name" value="Ryan_recept"/>
</dbReference>
<dbReference type="InterPro" id="IPR015925">
    <property type="entry name" value="Ryanodine_IP3_receptor"/>
</dbReference>
<dbReference type="InterPro" id="IPR003032">
    <property type="entry name" value="Ryanodine_rcpt"/>
</dbReference>
<dbReference type="InterPro" id="IPR009460">
    <property type="entry name" value="Ryanrecept_TM4-6"/>
</dbReference>
<dbReference type="InterPro" id="IPR048581">
    <property type="entry name" value="RYDR_Jsol"/>
</dbReference>
<dbReference type="InterPro" id="IPR035910">
    <property type="entry name" value="RyR/IP3R_RIH_dom_sf"/>
</dbReference>
<dbReference type="InterPro" id="IPR035761">
    <property type="entry name" value="SPRY1_RyR"/>
</dbReference>
<dbReference type="InterPro" id="IPR035764">
    <property type="entry name" value="SPRY2_RyR"/>
</dbReference>
<dbReference type="InterPro" id="IPR035762">
    <property type="entry name" value="SPRY3_RyR"/>
</dbReference>
<dbReference type="InterPro" id="IPR003877">
    <property type="entry name" value="SPRY_dom"/>
</dbReference>
<dbReference type="PANTHER" id="PTHR46399">
    <property type="entry name" value="B30.2/SPRY DOMAIN-CONTAINING PROTEIN"/>
    <property type="match status" value="1"/>
</dbReference>
<dbReference type="PANTHER" id="PTHR46399:SF7">
    <property type="entry name" value="RYANODINE RECEPTOR 2"/>
    <property type="match status" value="1"/>
</dbReference>
<dbReference type="Pfam" id="PF13499">
    <property type="entry name" value="EF-hand_7"/>
    <property type="match status" value="1"/>
</dbReference>
<dbReference type="Pfam" id="PF08709">
    <property type="entry name" value="Ins145_P3_rec"/>
    <property type="match status" value="1"/>
</dbReference>
<dbReference type="Pfam" id="PF00520">
    <property type="entry name" value="Ion_trans"/>
    <property type="match status" value="1"/>
</dbReference>
<dbReference type="Pfam" id="PF02815">
    <property type="entry name" value="MIR"/>
    <property type="match status" value="1"/>
</dbReference>
<dbReference type="Pfam" id="PF08454">
    <property type="entry name" value="RIH_assoc"/>
    <property type="match status" value="1"/>
</dbReference>
<dbReference type="Pfam" id="PF06459">
    <property type="entry name" value="RR_TM4-6"/>
    <property type="match status" value="1"/>
</dbReference>
<dbReference type="Pfam" id="PF01365">
    <property type="entry name" value="RYDR_ITPR"/>
    <property type="match status" value="2"/>
</dbReference>
<dbReference type="Pfam" id="PF21119">
    <property type="entry name" value="RYDR_Jsol"/>
    <property type="match status" value="1"/>
</dbReference>
<dbReference type="Pfam" id="PF02026">
    <property type="entry name" value="RyR"/>
    <property type="match status" value="4"/>
</dbReference>
<dbReference type="Pfam" id="PF00622">
    <property type="entry name" value="SPRY"/>
    <property type="match status" value="3"/>
</dbReference>
<dbReference type="PRINTS" id="PR00795">
    <property type="entry name" value="RYANODINER"/>
</dbReference>
<dbReference type="SMART" id="SM00472">
    <property type="entry name" value="MIR"/>
    <property type="match status" value="4"/>
</dbReference>
<dbReference type="SMART" id="SM00449">
    <property type="entry name" value="SPRY"/>
    <property type="match status" value="3"/>
</dbReference>
<dbReference type="SUPFAM" id="SSF49899">
    <property type="entry name" value="Concanavalin A-like lectins/glucanases"/>
    <property type="match status" value="2"/>
</dbReference>
<dbReference type="SUPFAM" id="SSF47473">
    <property type="entry name" value="EF-hand"/>
    <property type="match status" value="1"/>
</dbReference>
<dbReference type="SUPFAM" id="SSF100909">
    <property type="entry name" value="IP3 receptor type 1 binding core, domain 2"/>
    <property type="match status" value="2"/>
</dbReference>
<dbReference type="SUPFAM" id="SSF82109">
    <property type="entry name" value="MIR domain"/>
    <property type="match status" value="2"/>
</dbReference>
<dbReference type="PROSITE" id="PS50188">
    <property type="entry name" value="B302_SPRY"/>
    <property type="match status" value="3"/>
</dbReference>
<dbReference type="PROSITE" id="PS50919">
    <property type="entry name" value="MIR"/>
    <property type="match status" value="5"/>
</dbReference>